<proteinExistence type="inferred from homology"/>
<dbReference type="EMBL" id="CP000026">
    <property type="protein sequence ID" value="AAV79480.1"/>
    <property type="molecule type" value="Genomic_DNA"/>
</dbReference>
<dbReference type="RefSeq" id="WP_000819607.1">
    <property type="nucleotide sequence ID" value="NC_006511.1"/>
</dbReference>
<dbReference type="SMR" id="Q5PKV6"/>
<dbReference type="KEGG" id="spt:SPA3688"/>
<dbReference type="HOGENOM" id="CLU_001265_47_1_6"/>
<dbReference type="Proteomes" id="UP000008185">
    <property type="component" value="Chromosome"/>
</dbReference>
<dbReference type="GO" id="GO:0005886">
    <property type="term" value="C:plasma membrane"/>
    <property type="evidence" value="ECO:0007669"/>
    <property type="project" value="UniProtKB-SubCell"/>
</dbReference>
<dbReference type="GO" id="GO:0022857">
    <property type="term" value="F:transmembrane transporter activity"/>
    <property type="evidence" value="ECO:0007669"/>
    <property type="project" value="UniProtKB-UniRule"/>
</dbReference>
<dbReference type="CDD" id="cd17320">
    <property type="entry name" value="MFS_MdfA_MDR_like"/>
    <property type="match status" value="1"/>
</dbReference>
<dbReference type="FunFam" id="1.20.1720.10:FF:000003">
    <property type="entry name" value="Multidrug resistance protein MdtL"/>
    <property type="match status" value="1"/>
</dbReference>
<dbReference type="Gene3D" id="1.20.1720.10">
    <property type="entry name" value="Multidrug resistance protein D"/>
    <property type="match status" value="1"/>
</dbReference>
<dbReference type="HAMAP" id="MF_01530">
    <property type="entry name" value="MFS_MdtL"/>
    <property type="match status" value="1"/>
</dbReference>
<dbReference type="InterPro" id="IPR011701">
    <property type="entry name" value="MFS"/>
</dbReference>
<dbReference type="InterPro" id="IPR020846">
    <property type="entry name" value="MFS_dom"/>
</dbReference>
<dbReference type="InterPro" id="IPR036259">
    <property type="entry name" value="MFS_trans_sf"/>
</dbReference>
<dbReference type="InterPro" id="IPR023697">
    <property type="entry name" value="Multidrug-R_MdtL"/>
</dbReference>
<dbReference type="NCBIfam" id="NF007782">
    <property type="entry name" value="PRK10473.1"/>
    <property type="match status" value="1"/>
</dbReference>
<dbReference type="PANTHER" id="PTHR42718">
    <property type="entry name" value="MAJOR FACILITATOR SUPERFAMILY MULTIDRUG TRANSPORTER MFSC"/>
    <property type="match status" value="1"/>
</dbReference>
<dbReference type="PANTHER" id="PTHR42718:SF9">
    <property type="entry name" value="MAJOR FACILITATOR SUPERFAMILY MULTIDRUG TRANSPORTER MFSC"/>
    <property type="match status" value="1"/>
</dbReference>
<dbReference type="Pfam" id="PF07690">
    <property type="entry name" value="MFS_1"/>
    <property type="match status" value="1"/>
</dbReference>
<dbReference type="SUPFAM" id="SSF103473">
    <property type="entry name" value="MFS general substrate transporter"/>
    <property type="match status" value="1"/>
</dbReference>
<dbReference type="PROSITE" id="PS50850">
    <property type="entry name" value="MFS"/>
    <property type="match status" value="1"/>
</dbReference>
<accession>Q5PKV6</accession>
<sequence length="395" mass="42037">MKRFLLCSFALVLLYPAGIDMYLVGLPRIAADLNASEAQLHIAFSVYLAGMATAMLFAGKIADQSGRKPVAIVGAIVFMMASLLCSRASEGSLFLSGRFLQGVGAGGCYVVAFAILRDTLDEHRRAKVLSLLNGITCIVPVLAPVMGHLIMLRFPWQSLFYTMSTMGIIVGLLSLFILRETRPARLAPRDLSRSSPAAESLVNRFFVSRLAITTLSVSVILTFVNASPVLLMEVMGFSRGDYAITMALTAGVSMVVSFSTPFALGLFKPRTLMLVSQGLFLTAGVTLSLAHTNTVTLFGLMLICAGFSVGFGVAMSQALGPFSLRAGVASSTLGIAQVCGSSLWIWLAAILGISAMNMLIGILIGCSIVSILLIFSVAPNRSVAEHEEIPYQSRS</sequence>
<protein>
    <recommendedName>
        <fullName>Multidrug resistance protein MdtL</fullName>
    </recommendedName>
</protein>
<organism>
    <name type="scientific">Salmonella paratyphi A (strain ATCC 9150 / SARB42)</name>
    <dbReference type="NCBI Taxonomy" id="295319"/>
    <lineage>
        <taxon>Bacteria</taxon>
        <taxon>Pseudomonadati</taxon>
        <taxon>Pseudomonadota</taxon>
        <taxon>Gammaproteobacteria</taxon>
        <taxon>Enterobacterales</taxon>
        <taxon>Enterobacteriaceae</taxon>
        <taxon>Salmonella</taxon>
    </lineage>
</organism>
<evidence type="ECO:0000250" key="1"/>
<evidence type="ECO:0000255" key="2"/>
<evidence type="ECO:0000305" key="3"/>
<comment type="subcellular location">
    <subcellularLocation>
        <location evidence="1">Cell inner membrane</location>
        <topology evidence="1">Multi-pass membrane protein</topology>
    </subcellularLocation>
</comment>
<comment type="similarity">
    <text evidence="3">Belongs to the major facilitator superfamily. DHA1 family. MdtL (TC 2.A.1.2.22) subfamily.</text>
</comment>
<keyword id="KW-0997">Cell inner membrane</keyword>
<keyword id="KW-1003">Cell membrane</keyword>
<keyword id="KW-0472">Membrane</keyword>
<keyword id="KW-0812">Transmembrane</keyword>
<keyword id="KW-1133">Transmembrane helix</keyword>
<keyword id="KW-0813">Transport</keyword>
<reference key="1">
    <citation type="journal article" date="2004" name="Nat. Genet.">
        <title>Comparison of genome degradation in Paratyphi A and Typhi, human-restricted serovars of Salmonella enterica that cause typhoid.</title>
        <authorList>
            <person name="McClelland M."/>
            <person name="Sanderson K.E."/>
            <person name="Clifton S.W."/>
            <person name="Latreille P."/>
            <person name="Porwollik S."/>
            <person name="Sabo A."/>
            <person name="Meyer R."/>
            <person name="Bieri T."/>
            <person name="Ozersky P."/>
            <person name="McLellan M."/>
            <person name="Harkins C.R."/>
            <person name="Wang C."/>
            <person name="Nguyen C."/>
            <person name="Berghoff A."/>
            <person name="Elliott G."/>
            <person name="Kohlberg S."/>
            <person name="Strong C."/>
            <person name="Du F."/>
            <person name="Carter J."/>
            <person name="Kremizki C."/>
            <person name="Layman D."/>
            <person name="Leonard S."/>
            <person name="Sun H."/>
            <person name="Fulton L."/>
            <person name="Nash W."/>
            <person name="Miner T."/>
            <person name="Minx P."/>
            <person name="Delehaunty K."/>
            <person name="Fronick C."/>
            <person name="Magrini V."/>
            <person name="Nhan M."/>
            <person name="Warren W."/>
            <person name="Florea L."/>
            <person name="Spieth J."/>
            <person name="Wilson R.K."/>
        </authorList>
    </citation>
    <scope>NUCLEOTIDE SEQUENCE [LARGE SCALE GENOMIC DNA]</scope>
    <source>
        <strain>ATCC 9150 / SARB42</strain>
    </source>
</reference>
<name>MDTL_SALPA</name>
<gene>
    <name type="primary">mdtL</name>
    <name type="ordered locus">SPA3688</name>
</gene>
<feature type="chain" id="PRO_0000173358" description="Multidrug resistance protein MdtL">
    <location>
        <begin position="1"/>
        <end position="395"/>
    </location>
</feature>
<feature type="topological domain" description="Cytoplasmic" evidence="2">
    <location>
        <begin position="1"/>
        <end position="3"/>
    </location>
</feature>
<feature type="transmembrane region" description="Helical" evidence="2">
    <location>
        <begin position="4"/>
        <end position="24"/>
    </location>
</feature>
<feature type="topological domain" description="Periplasmic" evidence="2">
    <location>
        <begin position="25"/>
        <end position="41"/>
    </location>
</feature>
<feature type="transmembrane region" description="Helical" evidence="2">
    <location>
        <begin position="42"/>
        <end position="62"/>
    </location>
</feature>
<feature type="topological domain" description="Cytoplasmic" evidence="2">
    <location>
        <begin position="63"/>
        <end position="68"/>
    </location>
</feature>
<feature type="transmembrane region" description="Helical" evidence="2">
    <location>
        <begin position="69"/>
        <end position="89"/>
    </location>
</feature>
<feature type="topological domain" description="Periplasmic" evidence="2">
    <location>
        <begin position="90"/>
        <end position="92"/>
    </location>
</feature>
<feature type="transmembrane region" description="Helical" evidence="2">
    <location>
        <begin position="93"/>
        <end position="113"/>
    </location>
</feature>
<feature type="topological domain" description="Cytoplasmic" evidence="2">
    <location>
        <begin position="114"/>
        <end position="130"/>
    </location>
</feature>
<feature type="transmembrane region" description="Helical" evidence="2">
    <location>
        <begin position="131"/>
        <end position="151"/>
    </location>
</feature>
<feature type="topological domain" description="Periplasmic" evidence="2">
    <location>
        <begin position="152"/>
        <end position="157"/>
    </location>
</feature>
<feature type="transmembrane region" description="Helical" evidence="2">
    <location>
        <begin position="158"/>
        <end position="178"/>
    </location>
</feature>
<feature type="topological domain" description="Cytoplasmic" evidence="2">
    <location>
        <begin position="179"/>
        <end position="216"/>
    </location>
</feature>
<feature type="transmembrane region" description="Helical" evidence="2">
    <location>
        <begin position="217"/>
        <end position="237"/>
    </location>
</feature>
<feature type="topological domain" description="Periplasmic" evidence="2">
    <location>
        <begin position="238"/>
        <end position="246"/>
    </location>
</feature>
<feature type="transmembrane region" description="Helical" evidence="2">
    <location>
        <begin position="247"/>
        <end position="267"/>
    </location>
</feature>
<feature type="topological domain" description="Cytoplasmic" evidence="2">
    <location>
        <begin position="268"/>
        <end position="270"/>
    </location>
</feature>
<feature type="transmembrane region" description="Helical" evidence="2">
    <location>
        <begin position="271"/>
        <end position="291"/>
    </location>
</feature>
<feature type="topological domain" description="Periplasmic" evidence="2">
    <location>
        <begin position="292"/>
        <end position="294"/>
    </location>
</feature>
<feature type="transmembrane region" description="Helical" evidence="2">
    <location>
        <begin position="295"/>
        <end position="315"/>
    </location>
</feature>
<feature type="topological domain" description="Cytoplasmic" evidence="2">
    <location>
        <begin position="316"/>
        <end position="332"/>
    </location>
</feature>
<feature type="transmembrane region" description="Helical" evidence="2">
    <location>
        <begin position="333"/>
        <end position="353"/>
    </location>
</feature>
<feature type="topological domain" description="Periplasmic" evidence="2">
    <location>
        <begin position="354"/>
        <end position="357"/>
    </location>
</feature>
<feature type="transmembrane region" description="Helical" evidence="2">
    <location>
        <begin position="358"/>
        <end position="378"/>
    </location>
</feature>
<feature type="topological domain" description="Cytoplasmic" evidence="2">
    <location>
        <begin position="379"/>
        <end position="395"/>
    </location>
</feature>